<sequence>MTKLSVNINKVATLRNARGGNVPNVVKVALDCESFGADGITVHPRPDERHIRRSDVYDLRPLLRTEFNIEGYPSPEFIDLVLKVKPHQVTLVPDDPSQITSNSGWDTKVNFDFLTEVLDEFNGAGIRTSVFVAPDAEMIEYAAKAGADRVELYTEPYATAYPKDPAAAVAPFVEAAKAARRLGIGLNAGHDLSLLNLNYFYKNIPWLDEVSIGHALISDALYLGLERTIQEYKNCLR</sequence>
<name>PDXJ_BACFN</name>
<protein>
    <recommendedName>
        <fullName evidence="1">Pyridoxine 5'-phosphate synthase</fullName>
        <shortName evidence="1">PNP synthase</shortName>
        <ecNumber evidence="1">2.6.99.2</ecNumber>
    </recommendedName>
</protein>
<feature type="chain" id="PRO_0000231782" description="Pyridoxine 5'-phosphate synthase">
    <location>
        <begin position="1"/>
        <end position="237"/>
    </location>
</feature>
<feature type="active site" description="Proton acceptor" evidence="1">
    <location>
        <position position="43"/>
    </location>
</feature>
<feature type="active site" description="Proton acceptor" evidence="1">
    <location>
        <position position="70"/>
    </location>
</feature>
<feature type="active site" description="Proton donor" evidence="1">
    <location>
        <position position="190"/>
    </location>
</feature>
<feature type="binding site" evidence="1">
    <location>
        <position position="7"/>
    </location>
    <ligand>
        <name>3-amino-2-oxopropyl phosphate</name>
        <dbReference type="ChEBI" id="CHEBI:57279"/>
    </ligand>
</feature>
<feature type="binding site" evidence="1">
    <location>
        <position position="18"/>
    </location>
    <ligand>
        <name>3-amino-2-oxopropyl phosphate</name>
        <dbReference type="ChEBI" id="CHEBI:57279"/>
    </ligand>
</feature>
<feature type="binding site" evidence="1">
    <location>
        <position position="45"/>
    </location>
    <ligand>
        <name>1-deoxy-D-xylulose 5-phosphate</name>
        <dbReference type="ChEBI" id="CHEBI:57792"/>
    </ligand>
</feature>
<feature type="binding site" evidence="1">
    <location>
        <position position="50"/>
    </location>
    <ligand>
        <name>1-deoxy-D-xylulose 5-phosphate</name>
        <dbReference type="ChEBI" id="CHEBI:57792"/>
    </ligand>
</feature>
<feature type="binding site" evidence="1">
    <location>
        <position position="100"/>
    </location>
    <ligand>
        <name>1-deoxy-D-xylulose 5-phosphate</name>
        <dbReference type="ChEBI" id="CHEBI:57792"/>
    </ligand>
</feature>
<feature type="binding site" evidence="1">
    <location>
        <position position="191"/>
    </location>
    <ligand>
        <name>3-amino-2-oxopropyl phosphate</name>
        <dbReference type="ChEBI" id="CHEBI:57279"/>
    </ligand>
</feature>
<feature type="binding site" evidence="1">
    <location>
        <begin position="213"/>
        <end position="214"/>
    </location>
    <ligand>
        <name>3-amino-2-oxopropyl phosphate</name>
        <dbReference type="ChEBI" id="CHEBI:57279"/>
    </ligand>
</feature>
<feature type="site" description="Transition state stabilizer" evidence="1">
    <location>
        <position position="151"/>
    </location>
</feature>
<organism>
    <name type="scientific">Bacteroides fragilis (strain ATCC 25285 / DSM 2151 / CCUG 4856 / JCM 11019 / LMG 10263 / NCTC 9343 / Onslow / VPI 2553 / EN-2)</name>
    <dbReference type="NCBI Taxonomy" id="272559"/>
    <lineage>
        <taxon>Bacteria</taxon>
        <taxon>Pseudomonadati</taxon>
        <taxon>Bacteroidota</taxon>
        <taxon>Bacteroidia</taxon>
        <taxon>Bacteroidales</taxon>
        <taxon>Bacteroidaceae</taxon>
        <taxon>Bacteroides</taxon>
    </lineage>
</organism>
<keyword id="KW-0963">Cytoplasm</keyword>
<keyword id="KW-0664">Pyridoxine biosynthesis</keyword>
<keyword id="KW-0808">Transferase</keyword>
<accession>Q5L912</accession>
<evidence type="ECO:0000255" key="1">
    <source>
        <dbReference type="HAMAP-Rule" id="MF_00279"/>
    </source>
</evidence>
<gene>
    <name evidence="1" type="primary">pdxJ</name>
    <name type="ordered locus">BF3740</name>
</gene>
<proteinExistence type="inferred from homology"/>
<comment type="function">
    <text evidence="1">Catalyzes the complicated ring closure reaction between the two acyclic compounds 1-deoxy-D-xylulose-5-phosphate (DXP) and 3-amino-2-oxopropyl phosphate (1-amino-acetone-3-phosphate or AAP) to form pyridoxine 5'-phosphate (PNP) and inorganic phosphate.</text>
</comment>
<comment type="catalytic activity">
    <reaction evidence="1">
        <text>3-amino-2-oxopropyl phosphate + 1-deoxy-D-xylulose 5-phosphate = pyridoxine 5'-phosphate + phosphate + 2 H2O + H(+)</text>
        <dbReference type="Rhea" id="RHEA:15265"/>
        <dbReference type="ChEBI" id="CHEBI:15377"/>
        <dbReference type="ChEBI" id="CHEBI:15378"/>
        <dbReference type="ChEBI" id="CHEBI:43474"/>
        <dbReference type="ChEBI" id="CHEBI:57279"/>
        <dbReference type="ChEBI" id="CHEBI:57792"/>
        <dbReference type="ChEBI" id="CHEBI:58589"/>
        <dbReference type="EC" id="2.6.99.2"/>
    </reaction>
</comment>
<comment type="pathway">
    <text evidence="1">Cofactor biosynthesis; pyridoxine 5'-phosphate biosynthesis; pyridoxine 5'-phosphate from D-erythrose 4-phosphate: step 5/5.</text>
</comment>
<comment type="subunit">
    <text evidence="1">Homooctamer; tetramer of dimers.</text>
</comment>
<comment type="subcellular location">
    <subcellularLocation>
        <location evidence="1">Cytoplasm</location>
    </subcellularLocation>
</comment>
<comment type="similarity">
    <text evidence="1">Belongs to the PNP synthase family.</text>
</comment>
<reference key="1">
    <citation type="journal article" date="2005" name="Science">
        <title>Extensive DNA inversions in the B. fragilis genome control variable gene expression.</title>
        <authorList>
            <person name="Cerdeno-Tarraga A.-M."/>
            <person name="Patrick S."/>
            <person name="Crossman L.C."/>
            <person name="Blakely G."/>
            <person name="Abratt V."/>
            <person name="Lennard N."/>
            <person name="Poxton I."/>
            <person name="Duerden B."/>
            <person name="Harris B."/>
            <person name="Quail M.A."/>
            <person name="Barron A."/>
            <person name="Clark L."/>
            <person name="Corton C."/>
            <person name="Doggett J."/>
            <person name="Holden M.T.G."/>
            <person name="Larke N."/>
            <person name="Line A."/>
            <person name="Lord A."/>
            <person name="Norbertczak H."/>
            <person name="Ormond D."/>
            <person name="Price C."/>
            <person name="Rabbinowitsch E."/>
            <person name="Woodward J."/>
            <person name="Barrell B.G."/>
            <person name="Parkhill J."/>
        </authorList>
    </citation>
    <scope>NUCLEOTIDE SEQUENCE [LARGE SCALE GENOMIC DNA]</scope>
    <source>
        <strain>ATCC 25285 / DSM 2151 / CCUG 4856 / JCM 11019 / LMG 10263 / NCTC 9343 / Onslow / VPI 2553 / EN-2</strain>
    </source>
</reference>
<dbReference type="EC" id="2.6.99.2" evidence="1"/>
<dbReference type="EMBL" id="CR626927">
    <property type="protein sequence ID" value="CAH09420.1"/>
    <property type="molecule type" value="Genomic_DNA"/>
</dbReference>
<dbReference type="RefSeq" id="WP_005791132.1">
    <property type="nucleotide sequence ID" value="NZ_UFTH01000001.1"/>
</dbReference>
<dbReference type="SMR" id="Q5L912"/>
<dbReference type="PaxDb" id="272559-BF9343_3639"/>
<dbReference type="KEGG" id="bfs:BF9343_3639"/>
<dbReference type="eggNOG" id="COG0854">
    <property type="taxonomic scope" value="Bacteria"/>
</dbReference>
<dbReference type="HOGENOM" id="CLU_074563_1_0_10"/>
<dbReference type="UniPathway" id="UPA00244">
    <property type="reaction ID" value="UER00313"/>
</dbReference>
<dbReference type="Proteomes" id="UP000006731">
    <property type="component" value="Chromosome"/>
</dbReference>
<dbReference type="GO" id="GO:0005829">
    <property type="term" value="C:cytosol"/>
    <property type="evidence" value="ECO:0007669"/>
    <property type="project" value="TreeGrafter"/>
</dbReference>
<dbReference type="GO" id="GO:0033856">
    <property type="term" value="F:pyridoxine 5'-phosphate synthase activity"/>
    <property type="evidence" value="ECO:0007669"/>
    <property type="project" value="UniProtKB-EC"/>
</dbReference>
<dbReference type="GO" id="GO:0008615">
    <property type="term" value="P:pyridoxine biosynthetic process"/>
    <property type="evidence" value="ECO:0007669"/>
    <property type="project" value="UniProtKB-UniRule"/>
</dbReference>
<dbReference type="CDD" id="cd00003">
    <property type="entry name" value="PNPsynthase"/>
    <property type="match status" value="1"/>
</dbReference>
<dbReference type="FunFam" id="3.20.20.70:FF:000150">
    <property type="entry name" value="Pyridoxine 5'-phosphate synthase"/>
    <property type="match status" value="1"/>
</dbReference>
<dbReference type="Gene3D" id="3.20.20.70">
    <property type="entry name" value="Aldolase class I"/>
    <property type="match status" value="1"/>
</dbReference>
<dbReference type="HAMAP" id="MF_00279">
    <property type="entry name" value="PdxJ"/>
    <property type="match status" value="1"/>
</dbReference>
<dbReference type="InterPro" id="IPR013785">
    <property type="entry name" value="Aldolase_TIM"/>
</dbReference>
<dbReference type="InterPro" id="IPR004569">
    <property type="entry name" value="PyrdxlP_synth_PdxJ"/>
</dbReference>
<dbReference type="InterPro" id="IPR036130">
    <property type="entry name" value="Pyridoxine-5'_phos_synth"/>
</dbReference>
<dbReference type="NCBIfam" id="TIGR00559">
    <property type="entry name" value="pdxJ"/>
    <property type="match status" value="1"/>
</dbReference>
<dbReference type="NCBIfam" id="NF003625">
    <property type="entry name" value="PRK05265.1-3"/>
    <property type="match status" value="1"/>
</dbReference>
<dbReference type="NCBIfam" id="NF003626">
    <property type="entry name" value="PRK05265.1-4"/>
    <property type="match status" value="1"/>
</dbReference>
<dbReference type="PANTHER" id="PTHR30456">
    <property type="entry name" value="PYRIDOXINE 5'-PHOSPHATE SYNTHASE"/>
    <property type="match status" value="1"/>
</dbReference>
<dbReference type="PANTHER" id="PTHR30456:SF0">
    <property type="entry name" value="PYRIDOXINE 5'-PHOSPHATE SYNTHASE"/>
    <property type="match status" value="1"/>
</dbReference>
<dbReference type="Pfam" id="PF03740">
    <property type="entry name" value="PdxJ"/>
    <property type="match status" value="1"/>
</dbReference>
<dbReference type="SUPFAM" id="SSF63892">
    <property type="entry name" value="Pyridoxine 5'-phosphate synthase"/>
    <property type="match status" value="1"/>
</dbReference>